<name>DER_ECODH</name>
<comment type="function">
    <text evidence="1">GTPase that plays an essential role in the late steps of ribosome biogenesis.</text>
</comment>
<comment type="subunit">
    <text evidence="1">Associates with the 50S ribosomal subunit.</text>
</comment>
<comment type="similarity">
    <text evidence="1">Belongs to the TRAFAC class TrmE-Era-EngA-EngB-Septin-like GTPase superfamily. EngA (Der) GTPase family.</text>
</comment>
<evidence type="ECO:0000255" key="1">
    <source>
        <dbReference type="HAMAP-Rule" id="MF_00195"/>
    </source>
</evidence>
<protein>
    <recommendedName>
        <fullName evidence="1">GTPase Der</fullName>
    </recommendedName>
    <alternativeName>
        <fullName evidence="1">GTP-binding protein EngA</fullName>
    </alternativeName>
</protein>
<organism>
    <name type="scientific">Escherichia coli (strain K12 / DH10B)</name>
    <dbReference type="NCBI Taxonomy" id="316385"/>
    <lineage>
        <taxon>Bacteria</taxon>
        <taxon>Pseudomonadati</taxon>
        <taxon>Pseudomonadota</taxon>
        <taxon>Gammaproteobacteria</taxon>
        <taxon>Enterobacterales</taxon>
        <taxon>Enterobacteriaceae</taxon>
        <taxon>Escherichia</taxon>
    </lineage>
</organism>
<feature type="chain" id="PRO_1000099118" description="GTPase Der">
    <location>
        <begin position="1"/>
        <end position="490"/>
    </location>
</feature>
<feature type="domain" description="EngA-type G 1">
    <location>
        <begin position="3"/>
        <end position="166"/>
    </location>
</feature>
<feature type="domain" description="EngA-type G 2">
    <location>
        <begin position="203"/>
        <end position="376"/>
    </location>
</feature>
<feature type="domain" description="KH-like" evidence="1">
    <location>
        <begin position="377"/>
        <end position="461"/>
    </location>
</feature>
<feature type="binding site" evidence="1">
    <location>
        <begin position="9"/>
        <end position="16"/>
    </location>
    <ligand>
        <name>GTP</name>
        <dbReference type="ChEBI" id="CHEBI:37565"/>
        <label>1</label>
    </ligand>
</feature>
<feature type="binding site" evidence="1">
    <location>
        <begin position="56"/>
        <end position="60"/>
    </location>
    <ligand>
        <name>GTP</name>
        <dbReference type="ChEBI" id="CHEBI:37565"/>
        <label>1</label>
    </ligand>
</feature>
<feature type="binding site" evidence="1">
    <location>
        <begin position="118"/>
        <end position="121"/>
    </location>
    <ligand>
        <name>GTP</name>
        <dbReference type="ChEBI" id="CHEBI:37565"/>
        <label>1</label>
    </ligand>
</feature>
<feature type="binding site" evidence="1">
    <location>
        <begin position="209"/>
        <end position="216"/>
    </location>
    <ligand>
        <name>GTP</name>
        <dbReference type="ChEBI" id="CHEBI:37565"/>
        <label>2</label>
    </ligand>
</feature>
<feature type="binding site" evidence="1">
    <location>
        <begin position="256"/>
        <end position="260"/>
    </location>
    <ligand>
        <name>GTP</name>
        <dbReference type="ChEBI" id="CHEBI:37565"/>
        <label>2</label>
    </ligand>
</feature>
<feature type="binding site" evidence="1">
    <location>
        <begin position="321"/>
        <end position="324"/>
    </location>
    <ligand>
        <name>GTP</name>
        <dbReference type="ChEBI" id="CHEBI:37565"/>
        <label>2</label>
    </ligand>
</feature>
<keyword id="KW-0342">GTP-binding</keyword>
<keyword id="KW-0547">Nucleotide-binding</keyword>
<keyword id="KW-0677">Repeat</keyword>
<keyword id="KW-0690">Ribosome biogenesis</keyword>
<gene>
    <name evidence="1" type="primary">der</name>
    <name type="synonym">engA</name>
    <name type="ordered locus">ECDH10B_2677</name>
</gene>
<sequence>MVPVVALVGRPNVGKSTLFNRLTRTRDALVADFPGLTRDRKYGRAEIEGREFICIDTGGIDGTEDGVETRMAEQSLLAIEEADVVLFMVDARAGLMPADEAIAKHLRSREKPTFLVANKTDGLDPDQAVVDFYSLGLGEIYPIAASHGRGVLSLLEHVLLPWMEDLAPQEEVDEDAEYWAQFEAEENGEEEEEDDFDPQSLPIKLAIVGRPNVGKSTLTNRILGEERVVVYDMPGTTRDSIYIPMERDGREYVLIDTAGVRKRGKITDAVEKFSVIKTLQAIEDANVVMLVIDAREGISDQDLSLLGFILNSGRSLVIVVNKWDGLSQEVKEQVKETLDFRLGFIDFARVHFISALHGSGVGNLFESVREAYDSSTRRVGTSMLTRIMTMAVEDHQPPLVRGRRVKLKYAHAGGYNPPIVVIHGNQVKDLPDSYKRYLMNYFRKSLDVMGSPIRIQFKEGENPYANKRNTLTPTQMRKRKRLMKHIKKNK</sequence>
<accession>B1XAY6</accession>
<proteinExistence type="inferred from homology"/>
<reference key="1">
    <citation type="journal article" date="2008" name="J. Bacteriol.">
        <title>The complete genome sequence of Escherichia coli DH10B: insights into the biology of a laboratory workhorse.</title>
        <authorList>
            <person name="Durfee T."/>
            <person name="Nelson R."/>
            <person name="Baldwin S."/>
            <person name="Plunkett G. III"/>
            <person name="Burland V."/>
            <person name="Mau B."/>
            <person name="Petrosino J.F."/>
            <person name="Qin X."/>
            <person name="Muzny D.M."/>
            <person name="Ayele M."/>
            <person name="Gibbs R.A."/>
            <person name="Csorgo B."/>
            <person name="Posfai G."/>
            <person name="Weinstock G.M."/>
            <person name="Blattner F.R."/>
        </authorList>
    </citation>
    <scope>NUCLEOTIDE SEQUENCE [LARGE SCALE GENOMIC DNA]</scope>
    <source>
        <strain>K12 / DH10B</strain>
    </source>
</reference>
<dbReference type="EMBL" id="CP000948">
    <property type="protein sequence ID" value="ACB03663.1"/>
    <property type="molecule type" value="Genomic_DNA"/>
</dbReference>
<dbReference type="RefSeq" id="WP_000249410.1">
    <property type="nucleotide sequence ID" value="NC_010473.1"/>
</dbReference>
<dbReference type="SMR" id="B1XAY6"/>
<dbReference type="GeneID" id="75206204"/>
<dbReference type="KEGG" id="ecd:ECDH10B_2677"/>
<dbReference type="HOGENOM" id="CLU_016077_6_2_6"/>
<dbReference type="GO" id="GO:0005525">
    <property type="term" value="F:GTP binding"/>
    <property type="evidence" value="ECO:0007669"/>
    <property type="project" value="UniProtKB-UniRule"/>
</dbReference>
<dbReference type="GO" id="GO:0043022">
    <property type="term" value="F:ribosome binding"/>
    <property type="evidence" value="ECO:0007669"/>
    <property type="project" value="TreeGrafter"/>
</dbReference>
<dbReference type="GO" id="GO:0042254">
    <property type="term" value="P:ribosome biogenesis"/>
    <property type="evidence" value="ECO:0007669"/>
    <property type="project" value="UniProtKB-KW"/>
</dbReference>
<dbReference type="CDD" id="cd01894">
    <property type="entry name" value="EngA1"/>
    <property type="match status" value="1"/>
</dbReference>
<dbReference type="CDD" id="cd01895">
    <property type="entry name" value="EngA2"/>
    <property type="match status" value="1"/>
</dbReference>
<dbReference type="FunFam" id="3.30.300.20:FF:000004">
    <property type="entry name" value="GTPase Der"/>
    <property type="match status" value="1"/>
</dbReference>
<dbReference type="FunFam" id="3.40.50.300:FF:000040">
    <property type="entry name" value="GTPase Der"/>
    <property type="match status" value="1"/>
</dbReference>
<dbReference type="FunFam" id="3.40.50.300:FF:000057">
    <property type="entry name" value="GTPase Der"/>
    <property type="match status" value="1"/>
</dbReference>
<dbReference type="Gene3D" id="3.30.300.20">
    <property type="match status" value="1"/>
</dbReference>
<dbReference type="Gene3D" id="3.40.50.300">
    <property type="entry name" value="P-loop containing nucleotide triphosphate hydrolases"/>
    <property type="match status" value="2"/>
</dbReference>
<dbReference type="HAMAP" id="MF_00195">
    <property type="entry name" value="GTPase_Der"/>
    <property type="match status" value="1"/>
</dbReference>
<dbReference type="InterPro" id="IPR031166">
    <property type="entry name" value="G_ENGA"/>
</dbReference>
<dbReference type="InterPro" id="IPR006073">
    <property type="entry name" value="GTP-bd"/>
</dbReference>
<dbReference type="InterPro" id="IPR016484">
    <property type="entry name" value="GTPase_Der"/>
</dbReference>
<dbReference type="InterPro" id="IPR032859">
    <property type="entry name" value="KH_dom-like"/>
</dbReference>
<dbReference type="InterPro" id="IPR015946">
    <property type="entry name" value="KH_dom-like_a/b"/>
</dbReference>
<dbReference type="InterPro" id="IPR027417">
    <property type="entry name" value="P-loop_NTPase"/>
</dbReference>
<dbReference type="InterPro" id="IPR005225">
    <property type="entry name" value="Small_GTP-bd"/>
</dbReference>
<dbReference type="NCBIfam" id="TIGR03594">
    <property type="entry name" value="GTPase_EngA"/>
    <property type="match status" value="1"/>
</dbReference>
<dbReference type="NCBIfam" id="TIGR00231">
    <property type="entry name" value="small_GTP"/>
    <property type="match status" value="2"/>
</dbReference>
<dbReference type="PANTHER" id="PTHR43834">
    <property type="entry name" value="GTPASE DER"/>
    <property type="match status" value="1"/>
</dbReference>
<dbReference type="PANTHER" id="PTHR43834:SF6">
    <property type="entry name" value="GTPASE DER"/>
    <property type="match status" value="1"/>
</dbReference>
<dbReference type="Pfam" id="PF14714">
    <property type="entry name" value="KH_dom-like"/>
    <property type="match status" value="1"/>
</dbReference>
<dbReference type="Pfam" id="PF01926">
    <property type="entry name" value="MMR_HSR1"/>
    <property type="match status" value="2"/>
</dbReference>
<dbReference type="PIRSF" id="PIRSF006485">
    <property type="entry name" value="GTP-binding_EngA"/>
    <property type="match status" value="1"/>
</dbReference>
<dbReference type="PRINTS" id="PR00326">
    <property type="entry name" value="GTP1OBG"/>
</dbReference>
<dbReference type="SUPFAM" id="SSF52540">
    <property type="entry name" value="P-loop containing nucleoside triphosphate hydrolases"/>
    <property type="match status" value="2"/>
</dbReference>
<dbReference type="PROSITE" id="PS51712">
    <property type="entry name" value="G_ENGA"/>
    <property type="match status" value="2"/>
</dbReference>